<protein>
    <recommendedName>
        <fullName evidence="1">Small ribosomal subunit protein eS6</fullName>
    </recommendedName>
    <alternativeName>
        <fullName evidence="2">30S ribosomal protein S6e</fullName>
    </alternativeName>
</protein>
<name>RS6E_METLZ</name>
<accession>A2STM7</accession>
<feature type="chain" id="PRO_1000050635" description="Small ribosomal subunit protein eS6">
    <location>
        <begin position="1"/>
        <end position="129"/>
    </location>
</feature>
<proteinExistence type="inferred from homology"/>
<gene>
    <name evidence="1" type="primary">rps6e</name>
    <name type="ordered locus">Mlab_1519</name>
</gene>
<comment type="similarity">
    <text evidence="1">Belongs to the eukaryotic ribosomal protein eS6 family.</text>
</comment>
<organism>
    <name type="scientific">Methanocorpusculum labreanum (strain ATCC 43576 / DSM 4855 / Z)</name>
    <dbReference type="NCBI Taxonomy" id="410358"/>
    <lineage>
        <taxon>Archaea</taxon>
        <taxon>Methanobacteriati</taxon>
        <taxon>Methanobacteriota</taxon>
        <taxon>Stenosarchaea group</taxon>
        <taxon>Methanomicrobia</taxon>
        <taxon>Methanomicrobiales</taxon>
        <taxon>Methanocorpusculaceae</taxon>
        <taxon>Methanocorpusculum</taxon>
    </lineage>
</organism>
<evidence type="ECO:0000255" key="1">
    <source>
        <dbReference type="HAMAP-Rule" id="MF_00512"/>
    </source>
</evidence>
<evidence type="ECO:0000305" key="2"/>
<sequence>MVDFKVVLSDPKTGLSYKIDAAGAAAGALLGKKIGTEVDGAPFGMSGYKITITGGSDKTGTPARPDLPGNGRRGLLISDGFGFNATHNGERRRKSQRGNEIAADFVQVNAKITVYGEKPVTEIFAAAAE</sequence>
<dbReference type="EMBL" id="CP000559">
    <property type="protein sequence ID" value="ABN07683.1"/>
    <property type="molecule type" value="Genomic_DNA"/>
</dbReference>
<dbReference type="RefSeq" id="WP_011833886.1">
    <property type="nucleotide sequence ID" value="NC_008942.1"/>
</dbReference>
<dbReference type="SMR" id="A2STM7"/>
<dbReference type="STRING" id="410358.Mlab_1519"/>
<dbReference type="GeneID" id="4794501"/>
<dbReference type="KEGG" id="mla:Mlab_1519"/>
<dbReference type="eggNOG" id="arCOG01946">
    <property type="taxonomic scope" value="Archaea"/>
</dbReference>
<dbReference type="HOGENOM" id="CLU_109671_1_1_2"/>
<dbReference type="OrthoDB" id="7793at2157"/>
<dbReference type="Proteomes" id="UP000000365">
    <property type="component" value="Chromosome"/>
</dbReference>
<dbReference type="GO" id="GO:1990904">
    <property type="term" value="C:ribonucleoprotein complex"/>
    <property type="evidence" value="ECO:0007669"/>
    <property type="project" value="UniProtKB-KW"/>
</dbReference>
<dbReference type="GO" id="GO:0005840">
    <property type="term" value="C:ribosome"/>
    <property type="evidence" value="ECO:0007669"/>
    <property type="project" value="UniProtKB-KW"/>
</dbReference>
<dbReference type="GO" id="GO:0003735">
    <property type="term" value="F:structural constituent of ribosome"/>
    <property type="evidence" value="ECO:0007669"/>
    <property type="project" value="InterPro"/>
</dbReference>
<dbReference type="GO" id="GO:0006412">
    <property type="term" value="P:translation"/>
    <property type="evidence" value="ECO:0007669"/>
    <property type="project" value="UniProtKB-UniRule"/>
</dbReference>
<dbReference type="HAMAP" id="MF_00512">
    <property type="entry name" value="Ribosomal_eS6"/>
    <property type="match status" value="1"/>
</dbReference>
<dbReference type="InterPro" id="IPR001377">
    <property type="entry name" value="Ribosomal_eS6"/>
</dbReference>
<dbReference type="InterPro" id="IPR020924">
    <property type="entry name" value="Ribosomal_eS6_arc"/>
</dbReference>
<dbReference type="NCBIfam" id="NF003294">
    <property type="entry name" value="PRK04290.1-3"/>
    <property type="match status" value="1"/>
</dbReference>
<dbReference type="PANTHER" id="PTHR11502">
    <property type="entry name" value="40S RIBOSOMAL PROTEIN S6"/>
    <property type="match status" value="1"/>
</dbReference>
<dbReference type="Pfam" id="PF01092">
    <property type="entry name" value="Ribosomal_S6e"/>
    <property type="match status" value="1"/>
</dbReference>
<dbReference type="SMART" id="SM01405">
    <property type="entry name" value="Ribosomal_S6e"/>
    <property type="match status" value="1"/>
</dbReference>
<reference key="1">
    <citation type="journal article" date="2009" name="Stand. Genomic Sci.">
        <title>Complete genome sequence of Methanocorpusculum labreanum type strain Z.</title>
        <authorList>
            <person name="Anderson I.J."/>
            <person name="Sieprawska-Lupa M."/>
            <person name="Goltsman E."/>
            <person name="Lapidus A."/>
            <person name="Copeland A."/>
            <person name="Glavina Del Rio T."/>
            <person name="Tice H."/>
            <person name="Dalin E."/>
            <person name="Barry K."/>
            <person name="Pitluck S."/>
            <person name="Hauser L."/>
            <person name="Land M."/>
            <person name="Lucas S."/>
            <person name="Richardson P."/>
            <person name="Whitman W.B."/>
            <person name="Kyrpides N.C."/>
        </authorList>
    </citation>
    <scope>NUCLEOTIDE SEQUENCE [LARGE SCALE GENOMIC DNA]</scope>
    <source>
        <strain>ATCC 43576 / DSM 4855 / Z</strain>
    </source>
</reference>
<keyword id="KW-1185">Reference proteome</keyword>
<keyword id="KW-0687">Ribonucleoprotein</keyword>
<keyword id="KW-0689">Ribosomal protein</keyword>